<proteinExistence type="evidence at protein level"/>
<name>PETH1_THEFU</name>
<protein>
    <recommendedName>
        <fullName evidence="7">Cutinase cut1</fullName>
        <ecNumber evidence="11">3.1.1.74</ecNumber>
    </recommendedName>
    <alternativeName>
        <fullName evidence="10">Poly(ethylene terephthalate) hydrolase</fullName>
        <shortName evidence="10">PET hydrolase</shortName>
        <shortName evidence="10">PETase</shortName>
        <ecNumber evidence="5 6">3.1.1.101</ecNumber>
    </alternativeName>
</protein>
<evidence type="ECO:0000250" key="1">
    <source>
        <dbReference type="UniProtKB" id="A0A0K8P6T7"/>
    </source>
</evidence>
<evidence type="ECO:0000250" key="2">
    <source>
        <dbReference type="UniProtKB" id="F7IX06"/>
    </source>
</evidence>
<evidence type="ECO:0000255" key="3"/>
<evidence type="ECO:0000269" key="4">
    <source>
    </source>
</evidence>
<evidence type="ECO:0000269" key="5">
    <source>
    </source>
</evidence>
<evidence type="ECO:0000269" key="6">
    <source>
    </source>
</evidence>
<evidence type="ECO:0000303" key="7">
    <source>
    </source>
</evidence>
<evidence type="ECO:0000303" key="8">
    <source>
    </source>
</evidence>
<evidence type="ECO:0000303" key="9">
    <source>
    </source>
</evidence>
<evidence type="ECO:0000305" key="10"/>
<evidence type="ECO:0000305" key="11">
    <source>
    </source>
</evidence>
<evidence type="ECO:0000312" key="12">
    <source>
        <dbReference type="EMBL" id="AET05798.1"/>
    </source>
</evidence>
<keyword id="KW-1015">Disulfide bond</keyword>
<keyword id="KW-0378">Hydrolase</keyword>
<keyword id="KW-0574">Periplasm</keyword>
<keyword id="KW-0964">Secreted</keyword>
<keyword id="KW-0719">Serine esterase</keyword>
<keyword id="KW-0732">Signal</keyword>
<reference evidence="12" key="1">
    <citation type="journal article" date="2013" name="Appl. Biochem. Biotechnol.">
        <title>Production optimization and characterization of recombinant cutinases from Thermobifida fusca sp. NRRL B-8184.</title>
        <authorList>
            <person name="Hegde K."/>
            <person name="Veeranki V.D."/>
        </authorList>
    </citation>
    <scope>NUCLEOTIDE SEQUENCE [GENOMIC DNA]</scope>
    <scope>FUNCTION</scope>
    <scope>CATALYTIC ACTIVITY</scope>
    <scope>BIOPHYSICOCHEMICAL PROPERTIES</scope>
    <scope>SUBCELLULAR LOCATION</scope>
    <scope>BIOTECHNOLOGY</scope>
    <source>
        <strain evidence="7">NRRL B-8184</strain>
    </source>
</reference>
<reference evidence="10" key="2">
    <citation type="journal article" date="2015" name="Biotechnol. J.">
        <title>Ca2+ and Mg2+ binding site engineering increases the degradation of polyethylene terephthalate films by polyester hydrolases from Thermobifida fusca.</title>
        <authorList>
            <person name="Then J."/>
            <person name="Wei R."/>
            <person name="Oeser T."/>
            <person name="Barth M."/>
            <person name="Belisario-Ferrari M.R."/>
            <person name="Schmidt J."/>
            <person name="Zimmermann W."/>
        </authorList>
    </citation>
    <scope>FUNCTION</scope>
    <scope>CATALYTIC ACTIVITY</scope>
    <scope>ACTIVITY REGULATION</scope>
    <scope>BIOTECHNOLOGY</scope>
    <source>
        <strain evidence="8">DSM 43793</strain>
        <strain evidence="8">DSM 6013</strain>
    </source>
</reference>
<reference evidence="10" key="3">
    <citation type="journal article" date="2020" name="Nature">
        <title>An engineered PET depolymerase to break down and recycle plastic bottles.</title>
        <authorList>
            <person name="Tournier V."/>
            <person name="Topham C.M."/>
            <person name="Gilles A."/>
            <person name="David B."/>
            <person name="Folgoas C."/>
            <person name="Moya-Leclair E."/>
            <person name="Kamionka E."/>
            <person name="Desrousseaux M.L."/>
            <person name="Texier H."/>
            <person name="Gavalda S."/>
            <person name="Cot M."/>
            <person name="Guemard E."/>
            <person name="Dalibey M."/>
            <person name="Nomme J."/>
            <person name="Cioci G."/>
            <person name="Barbe S."/>
            <person name="Chateau M."/>
            <person name="Andre I."/>
            <person name="Duquesne S."/>
            <person name="Marty A."/>
        </authorList>
    </citation>
    <scope>FUNCTION</scope>
    <scope>CATALYTIC ACTIVITY</scope>
    <scope>BIOPHYSICOCHEMICAL PROPERTIES</scope>
    <scope>BIOTECHNOLOGY</scope>
    <source>
        <strain evidence="9">DSM 43793</strain>
    </source>
</reference>
<comment type="function">
    <text evidence="4 5 6 11">Catalyzes the hydrolysis of cutin, a polyester that forms the structure of plant cuticle (Probable). Shows esterase activity towards p-nitrophenol-linked aliphatic esters (pNP-aliphatic esters) (PubMed:23604968, PubMed:25545638). Capable of degrading the plastic poly(ethylene terephthalate) (PET), the most abundant polyester plastic in the world (PubMed:25545638, PubMed:32269349).</text>
</comment>
<comment type="catalytic activity">
    <reaction evidence="4">
        <text>an acetyl ester + H2O = an aliphatic alcohol + acetate + H(+)</text>
        <dbReference type="Rhea" id="RHEA:12957"/>
        <dbReference type="ChEBI" id="CHEBI:2571"/>
        <dbReference type="ChEBI" id="CHEBI:15377"/>
        <dbReference type="ChEBI" id="CHEBI:15378"/>
        <dbReference type="ChEBI" id="CHEBI:30089"/>
        <dbReference type="ChEBI" id="CHEBI:47622"/>
    </reaction>
</comment>
<comment type="catalytic activity">
    <reaction evidence="4 5">
        <text>a butanoate ester + H2O = an aliphatic alcohol + butanoate + H(+)</text>
        <dbReference type="Rhea" id="RHEA:47348"/>
        <dbReference type="ChEBI" id="CHEBI:2571"/>
        <dbReference type="ChEBI" id="CHEBI:15377"/>
        <dbReference type="ChEBI" id="CHEBI:15378"/>
        <dbReference type="ChEBI" id="CHEBI:17968"/>
        <dbReference type="ChEBI" id="CHEBI:50477"/>
    </reaction>
    <physiologicalReaction direction="left-to-right" evidence="4 5">
        <dbReference type="Rhea" id="RHEA:47349"/>
    </physiologicalReaction>
</comment>
<comment type="catalytic activity">
    <reaction evidence="4">
        <text>pentanoate ester + H2O = pentanoate + an aliphatic alcohol + H(+)</text>
        <dbReference type="Rhea" id="RHEA:48436"/>
        <dbReference type="ChEBI" id="CHEBI:2571"/>
        <dbReference type="ChEBI" id="CHEBI:15377"/>
        <dbReference type="ChEBI" id="CHEBI:15378"/>
        <dbReference type="ChEBI" id="CHEBI:31011"/>
        <dbReference type="ChEBI" id="CHEBI:50871"/>
    </reaction>
    <physiologicalReaction direction="left-to-right" evidence="4">
        <dbReference type="Rhea" id="RHEA:48437"/>
    </physiologicalReaction>
</comment>
<comment type="catalytic activity">
    <reaction evidence="4">
        <text>an octanoate ester + H2O = an aliphatic alcohol + octanoate + H(+)</text>
        <dbReference type="Rhea" id="RHEA:47356"/>
        <dbReference type="ChEBI" id="CHEBI:2571"/>
        <dbReference type="ChEBI" id="CHEBI:15377"/>
        <dbReference type="ChEBI" id="CHEBI:15378"/>
        <dbReference type="ChEBI" id="CHEBI:25646"/>
        <dbReference type="ChEBI" id="CHEBI:87657"/>
    </reaction>
</comment>
<comment type="catalytic activity">
    <reaction evidence="4">
        <text>decanoate ester + H2O = decanoate + an aliphatic alcohol + H(+)</text>
        <dbReference type="Rhea" id="RHEA:47360"/>
        <dbReference type="ChEBI" id="CHEBI:2571"/>
        <dbReference type="ChEBI" id="CHEBI:15377"/>
        <dbReference type="ChEBI" id="CHEBI:15378"/>
        <dbReference type="ChEBI" id="CHEBI:27689"/>
        <dbReference type="ChEBI" id="CHEBI:87658"/>
    </reaction>
    <physiologicalReaction direction="left-to-right" evidence="4">
        <dbReference type="Rhea" id="RHEA:47361"/>
    </physiologicalReaction>
</comment>
<comment type="catalytic activity">
    <reaction evidence="4">
        <text>a dodecanoate ester + H2O = an aliphatic alcohol + dodecanoate + H(+)</text>
        <dbReference type="Rhea" id="RHEA:47364"/>
        <dbReference type="ChEBI" id="CHEBI:2571"/>
        <dbReference type="ChEBI" id="CHEBI:15377"/>
        <dbReference type="ChEBI" id="CHEBI:15378"/>
        <dbReference type="ChEBI" id="CHEBI:18262"/>
        <dbReference type="ChEBI" id="CHEBI:87659"/>
    </reaction>
    <physiologicalReaction direction="left-to-right" evidence="4">
        <dbReference type="Rhea" id="RHEA:47365"/>
    </physiologicalReaction>
</comment>
<comment type="catalytic activity">
    <reaction evidence="4">
        <text>a tetradecanoate ester + H2O = an aliphatic alcohol + tetradecanoate + H(+)</text>
        <dbReference type="Rhea" id="RHEA:47388"/>
        <dbReference type="ChEBI" id="CHEBI:2571"/>
        <dbReference type="ChEBI" id="CHEBI:15377"/>
        <dbReference type="ChEBI" id="CHEBI:15378"/>
        <dbReference type="ChEBI" id="CHEBI:30807"/>
        <dbReference type="ChEBI" id="CHEBI:87691"/>
    </reaction>
    <physiologicalReaction direction="left-to-right" evidence="4">
        <dbReference type="Rhea" id="RHEA:47389"/>
    </physiologicalReaction>
</comment>
<comment type="catalytic activity">
    <reaction evidence="4">
        <text>hexadecanoate ester + H2O = an aliphatic alcohol + hexadecanoate + H(+)</text>
        <dbReference type="Rhea" id="RHEA:47392"/>
        <dbReference type="ChEBI" id="CHEBI:2571"/>
        <dbReference type="ChEBI" id="CHEBI:7896"/>
        <dbReference type="ChEBI" id="CHEBI:15377"/>
        <dbReference type="ChEBI" id="CHEBI:15378"/>
        <dbReference type="ChEBI" id="CHEBI:25835"/>
    </reaction>
    <physiologicalReaction direction="left-to-right" evidence="4">
        <dbReference type="Rhea" id="RHEA:47393"/>
    </physiologicalReaction>
</comment>
<comment type="catalytic activity">
    <reaction evidence="11">
        <text>cutin + H2O = cutin monomers.</text>
        <dbReference type="EC" id="3.1.1.74"/>
    </reaction>
</comment>
<comment type="catalytic activity">
    <reaction evidence="5 6">
        <text>(ethylene terephthalate)(n) + H2O = (ethylene terephthalate)(n-1) + 4-[(2-hydroxyethoxy)carbonyl]benzoate + H(+)</text>
        <dbReference type="Rhea" id="RHEA:49528"/>
        <dbReference type="Rhea" id="RHEA-COMP:12420"/>
        <dbReference type="Rhea" id="RHEA-COMP:12421"/>
        <dbReference type="ChEBI" id="CHEBI:15377"/>
        <dbReference type="ChEBI" id="CHEBI:15378"/>
        <dbReference type="ChEBI" id="CHEBI:131701"/>
        <dbReference type="ChEBI" id="CHEBI:131704"/>
        <dbReference type="EC" id="3.1.1.101"/>
    </reaction>
    <physiologicalReaction direction="left-to-right" evidence="5 6">
        <dbReference type="Rhea" id="RHEA:49529"/>
    </physiologicalReaction>
</comment>
<comment type="activity regulation">
    <text evidence="5">Activated by magnesium ions (PubMed:25545638). Activated by calcium ions (PubMed:25545638).</text>
</comment>
<comment type="biophysicochemical properties">
    <kinetics>
        <KM evidence="4">131 uM for pNP-butanoate (at 50 degrees Celsius and pH 8)</KM>
        <text evidence="4">kcat is 178 sec(-1) for the hydrolysis of pNP-butanoate (at 50 degrees Celsius and pH 8).</text>
    </kinetics>
    <phDependence>
        <text evidence="4">Optimum pH is 8.</text>
    </phDependence>
    <temperatureDependence>
        <text evidence="4 6">Optimum temperature is 55 degrees Celsius (PubMed:23604968). Optimum temperature is 65 degrees Celsius (PubMed:32269349).</text>
    </temperatureDependence>
</comment>
<comment type="subcellular location">
    <subcellularLocation>
        <location evidence="4">Secreted</location>
    </subcellularLocation>
    <subcellularLocation>
        <location evidence="4">Periplasm</location>
    </subcellularLocation>
</comment>
<comment type="biotechnology">
    <text evidence="4 5 6">Shows promising applications in the laundry industry as a cleansing agent, as it is thermostable and tolerant to surfactants and organic solvents (PubMed:23604968). Has potential for application in biological recycling of plastic waste products (PubMed:25545638, PubMed:32269349).</text>
</comment>
<comment type="similarity">
    <text evidence="10">Belongs to the AB hydrolase superfamily.</text>
</comment>
<feature type="signal peptide" evidence="3">
    <location>
        <begin position="1"/>
        <end position="58"/>
    </location>
</feature>
<feature type="chain" id="PRO_0000455609" description="Cutinase cut1" evidence="3">
    <location>
        <begin position="59"/>
        <end position="319"/>
    </location>
</feature>
<feature type="active site" description="Nucleophile" evidence="1">
    <location>
        <position position="188"/>
    </location>
</feature>
<feature type="active site" description="Charge relay system" evidence="1">
    <location>
        <position position="234"/>
    </location>
</feature>
<feature type="active site" description="Charge relay system" evidence="1">
    <location>
        <position position="266"/>
    </location>
</feature>
<feature type="binding site" evidence="2">
    <location>
        <position position="118"/>
    </location>
    <ligand>
        <name>poly(ethylene terephthalate)</name>
        <dbReference type="ChEBI" id="CHEBI:131701"/>
    </ligand>
</feature>
<feature type="binding site" evidence="2">
    <location>
        <position position="189"/>
    </location>
    <ligand>
        <name>poly(ethylene terephthalate)</name>
        <dbReference type="ChEBI" id="CHEBI:131701"/>
    </ligand>
</feature>
<feature type="binding site" evidence="2">
    <location>
        <position position="213"/>
    </location>
    <ligand>
        <name>poly(ethylene terephthalate)</name>
        <dbReference type="ChEBI" id="CHEBI:131701"/>
    </ligand>
</feature>
<feature type="disulfide bond" evidence="1">
    <location>
        <begin position="299"/>
        <end position="317"/>
    </location>
</feature>
<organism evidence="12">
    <name type="scientific">Thermobifida fusca</name>
    <name type="common">Thermomonospora fusca</name>
    <dbReference type="NCBI Taxonomy" id="2021"/>
    <lineage>
        <taxon>Bacteria</taxon>
        <taxon>Bacillati</taxon>
        <taxon>Actinomycetota</taxon>
        <taxon>Actinomycetes</taxon>
        <taxon>Streptosporangiales</taxon>
        <taxon>Nocardiopsidaceae</taxon>
        <taxon>Thermobifida</taxon>
    </lineage>
</organism>
<accession>G8GER6</accession>
<gene>
    <name evidence="7" type="primary">cut_1</name>
</gene>
<dbReference type="EC" id="3.1.1.74" evidence="11"/>
<dbReference type="EC" id="3.1.1.101" evidence="5 6"/>
<dbReference type="EMBL" id="JN129499">
    <property type="protein sequence ID" value="AET05798.1"/>
    <property type="molecule type" value="Genomic_DNA"/>
</dbReference>
<dbReference type="SMR" id="G8GER6"/>
<dbReference type="ESTHER" id="thefu-q6a0i3">
    <property type="family name" value="Polyesterase-lipase-cutinase"/>
</dbReference>
<dbReference type="OMA" id="ASHFFPQ"/>
<dbReference type="BRENDA" id="3.1.1.74">
    <property type="organism ID" value="6298"/>
</dbReference>
<dbReference type="SABIO-RK" id="G8GER6"/>
<dbReference type="GO" id="GO:0005576">
    <property type="term" value="C:extracellular region"/>
    <property type="evidence" value="ECO:0007669"/>
    <property type="project" value="UniProtKB-SubCell"/>
</dbReference>
<dbReference type="GO" id="GO:0042597">
    <property type="term" value="C:periplasmic space"/>
    <property type="evidence" value="ECO:0007669"/>
    <property type="project" value="UniProtKB-SubCell"/>
</dbReference>
<dbReference type="GO" id="GO:0008126">
    <property type="term" value="F:acetylesterase activity"/>
    <property type="evidence" value="ECO:0007669"/>
    <property type="project" value="RHEA"/>
</dbReference>
<dbReference type="GO" id="GO:0050525">
    <property type="term" value="F:cutinase activity"/>
    <property type="evidence" value="ECO:0000314"/>
    <property type="project" value="UniProtKB"/>
</dbReference>
<dbReference type="Gene3D" id="3.40.50.1820">
    <property type="entry name" value="alpha/beta hydrolase"/>
    <property type="match status" value="1"/>
</dbReference>
<dbReference type="InterPro" id="IPR029058">
    <property type="entry name" value="AB_hydrolase_fold"/>
</dbReference>
<dbReference type="InterPro" id="IPR050261">
    <property type="entry name" value="FrsA_esterase"/>
</dbReference>
<dbReference type="InterPro" id="IPR041127">
    <property type="entry name" value="PET_hydrolase/cutinase-like"/>
</dbReference>
<dbReference type="PANTHER" id="PTHR22946">
    <property type="entry name" value="DIENELACTONE HYDROLASE DOMAIN-CONTAINING PROTEIN-RELATED"/>
    <property type="match status" value="1"/>
</dbReference>
<dbReference type="PANTHER" id="PTHR22946:SF9">
    <property type="entry name" value="POLYKETIDE TRANSFERASE AF380"/>
    <property type="match status" value="1"/>
</dbReference>
<dbReference type="Pfam" id="PF12740">
    <property type="entry name" value="PETase"/>
    <property type="match status" value="1"/>
</dbReference>
<dbReference type="SUPFAM" id="SSF53474">
    <property type="entry name" value="alpha/beta-Hydrolases"/>
    <property type="match status" value="1"/>
</dbReference>
<sequence>MPPHAARPGPAQNRRGRAMAVITPRRERSSLLSRALRFTAAAATALVTAVSLAAPAHAANPYERGPNPTDALLEARSGPFSVSEERASRFGADGFGGGTIYYPRENNTYGAVAISPGYTGTQASVAWLGERIASHGFVVITIDTNTTLDQPDSRARQLNAALDYMINDASSAVRSRIDSSRLAVMGHSMGGGGTLRLASQRPDLKAAIPLTPWHLNKNWSSVRVPTLIIGADLDTIAPVLTHARPFYNSLPTSISKAYLELDGATHFAPNIPNKIIGKYSVAWLKRFVDNDTRYTQFLCPGPRDGLFGEVEEYRSTCPF</sequence>